<gene>
    <name evidence="1" type="primary">mutS2</name>
    <name evidence="1" type="synonym">rqcU</name>
    <name type="ordered locus">SGO_0260</name>
</gene>
<dbReference type="EC" id="3.1.-.-" evidence="1"/>
<dbReference type="EC" id="3.6.4.-" evidence="1"/>
<dbReference type="EMBL" id="CP000725">
    <property type="protein sequence ID" value="ABV09884.1"/>
    <property type="molecule type" value="Genomic_DNA"/>
</dbReference>
<dbReference type="RefSeq" id="WP_011999790.1">
    <property type="nucleotide sequence ID" value="NC_009785.1"/>
</dbReference>
<dbReference type="SMR" id="A8AUW9"/>
<dbReference type="STRING" id="467705.SGO_0260"/>
<dbReference type="KEGG" id="sgo:SGO_0260"/>
<dbReference type="eggNOG" id="COG1193">
    <property type="taxonomic scope" value="Bacteria"/>
</dbReference>
<dbReference type="HOGENOM" id="CLU_011252_2_1_9"/>
<dbReference type="Proteomes" id="UP000001131">
    <property type="component" value="Chromosome"/>
</dbReference>
<dbReference type="GO" id="GO:0005524">
    <property type="term" value="F:ATP binding"/>
    <property type="evidence" value="ECO:0007669"/>
    <property type="project" value="UniProtKB-UniRule"/>
</dbReference>
<dbReference type="GO" id="GO:0016887">
    <property type="term" value="F:ATP hydrolysis activity"/>
    <property type="evidence" value="ECO:0007669"/>
    <property type="project" value="InterPro"/>
</dbReference>
<dbReference type="GO" id="GO:0140664">
    <property type="term" value="F:ATP-dependent DNA damage sensor activity"/>
    <property type="evidence" value="ECO:0007669"/>
    <property type="project" value="InterPro"/>
</dbReference>
<dbReference type="GO" id="GO:0004519">
    <property type="term" value="F:endonuclease activity"/>
    <property type="evidence" value="ECO:0007669"/>
    <property type="project" value="UniProtKB-UniRule"/>
</dbReference>
<dbReference type="GO" id="GO:0030983">
    <property type="term" value="F:mismatched DNA binding"/>
    <property type="evidence" value="ECO:0007669"/>
    <property type="project" value="InterPro"/>
</dbReference>
<dbReference type="GO" id="GO:0043023">
    <property type="term" value="F:ribosomal large subunit binding"/>
    <property type="evidence" value="ECO:0007669"/>
    <property type="project" value="UniProtKB-UniRule"/>
</dbReference>
<dbReference type="GO" id="GO:0019843">
    <property type="term" value="F:rRNA binding"/>
    <property type="evidence" value="ECO:0007669"/>
    <property type="project" value="UniProtKB-UniRule"/>
</dbReference>
<dbReference type="GO" id="GO:0006298">
    <property type="term" value="P:mismatch repair"/>
    <property type="evidence" value="ECO:0007669"/>
    <property type="project" value="InterPro"/>
</dbReference>
<dbReference type="GO" id="GO:0045910">
    <property type="term" value="P:negative regulation of DNA recombination"/>
    <property type="evidence" value="ECO:0007669"/>
    <property type="project" value="InterPro"/>
</dbReference>
<dbReference type="GO" id="GO:0072344">
    <property type="term" value="P:rescue of stalled ribosome"/>
    <property type="evidence" value="ECO:0007669"/>
    <property type="project" value="UniProtKB-UniRule"/>
</dbReference>
<dbReference type="CDD" id="cd03280">
    <property type="entry name" value="ABC_MutS2"/>
    <property type="match status" value="1"/>
</dbReference>
<dbReference type="FunFam" id="3.40.50.300:FF:000830">
    <property type="entry name" value="Endonuclease MutS2"/>
    <property type="match status" value="1"/>
</dbReference>
<dbReference type="Gene3D" id="3.30.1370.110">
    <property type="match status" value="1"/>
</dbReference>
<dbReference type="Gene3D" id="3.40.50.300">
    <property type="entry name" value="P-loop containing nucleotide triphosphate hydrolases"/>
    <property type="match status" value="1"/>
</dbReference>
<dbReference type="HAMAP" id="MF_00092">
    <property type="entry name" value="MutS2"/>
    <property type="match status" value="1"/>
</dbReference>
<dbReference type="InterPro" id="IPR000432">
    <property type="entry name" value="DNA_mismatch_repair_MutS_C"/>
</dbReference>
<dbReference type="InterPro" id="IPR007696">
    <property type="entry name" value="DNA_mismatch_repair_MutS_core"/>
</dbReference>
<dbReference type="InterPro" id="IPR036187">
    <property type="entry name" value="DNA_mismatch_repair_MutS_sf"/>
</dbReference>
<dbReference type="InterPro" id="IPR046893">
    <property type="entry name" value="MSSS"/>
</dbReference>
<dbReference type="InterPro" id="IPR045076">
    <property type="entry name" value="MutS"/>
</dbReference>
<dbReference type="InterPro" id="IPR005747">
    <property type="entry name" value="MutS2"/>
</dbReference>
<dbReference type="InterPro" id="IPR027417">
    <property type="entry name" value="P-loop_NTPase"/>
</dbReference>
<dbReference type="InterPro" id="IPR002625">
    <property type="entry name" value="Smr_dom"/>
</dbReference>
<dbReference type="InterPro" id="IPR036063">
    <property type="entry name" value="Smr_dom_sf"/>
</dbReference>
<dbReference type="NCBIfam" id="TIGR01069">
    <property type="entry name" value="mutS2"/>
    <property type="match status" value="1"/>
</dbReference>
<dbReference type="PANTHER" id="PTHR48466">
    <property type="entry name" value="OS10G0509000 PROTEIN-RELATED"/>
    <property type="match status" value="1"/>
</dbReference>
<dbReference type="PANTHER" id="PTHR48466:SF1">
    <property type="entry name" value="SMR DOMAIN-CONTAINING PROTEIN"/>
    <property type="match status" value="1"/>
</dbReference>
<dbReference type="Pfam" id="PF20297">
    <property type="entry name" value="MSSS"/>
    <property type="match status" value="1"/>
</dbReference>
<dbReference type="Pfam" id="PF00488">
    <property type="entry name" value="MutS_V"/>
    <property type="match status" value="1"/>
</dbReference>
<dbReference type="Pfam" id="PF01713">
    <property type="entry name" value="Smr"/>
    <property type="match status" value="1"/>
</dbReference>
<dbReference type="PIRSF" id="PIRSF005814">
    <property type="entry name" value="MutS_YshD"/>
    <property type="match status" value="1"/>
</dbReference>
<dbReference type="SMART" id="SM00534">
    <property type="entry name" value="MUTSac"/>
    <property type="match status" value="1"/>
</dbReference>
<dbReference type="SMART" id="SM00533">
    <property type="entry name" value="MUTSd"/>
    <property type="match status" value="1"/>
</dbReference>
<dbReference type="SMART" id="SM00463">
    <property type="entry name" value="SMR"/>
    <property type="match status" value="1"/>
</dbReference>
<dbReference type="SUPFAM" id="SSF48334">
    <property type="entry name" value="DNA repair protein MutS, domain III"/>
    <property type="match status" value="1"/>
</dbReference>
<dbReference type="SUPFAM" id="SSF52540">
    <property type="entry name" value="P-loop containing nucleoside triphosphate hydrolases"/>
    <property type="match status" value="1"/>
</dbReference>
<dbReference type="SUPFAM" id="SSF160443">
    <property type="entry name" value="SMR domain-like"/>
    <property type="match status" value="1"/>
</dbReference>
<dbReference type="PROSITE" id="PS00486">
    <property type="entry name" value="DNA_MISMATCH_REPAIR_2"/>
    <property type="match status" value="1"/>
</dbReference>
<dbReference type="PROSITE" id="PS50828">
    <property type="entry name" value="SMR"/>
    <property type="match status" value="1"/>
</dbReference>
<name>MUTS2_STRGC</name>
<keyword id="KW-0067">ATP-binding</keyword>
<keyword id="KW-0238">DNA-binding</keyword>
<keyword id="KW-0255">Endonuclease</keyword>
<keyword id="KW-0378">Hydrolase</keyword>
<keyword id="KW-0540">Nuclease</keyword>
<keyword id="KW-0547">Nucleotide-binding</keyword>
<keyword id="KW-1185">Reference proteome</keyword>
<keyword id="KW-0694">RNA-binding</keyword>
<keyword id="KW-0699">rRNA-binding</keyword>
<protein>
    <recommendedName>
        <fullName evidence="1">Endonuclease MutS2</fullName>
        <ecNumber evidence="1">3.1.-.-</ecNumber>
    </recommendedName>
    <alternativeName>
        <fullName evidence="1">Ribosome-associated protein quality control-upstream factor</fullName>
        <shortName evidence="1">RQC-upstream factor</shortName>
        <shortName evidence="1">RqcU</shortName>
        <ecNumber evidence="1">3.6.4.-</ecNumber>
    </alternativeName>
</protein>
<reference key="1">
    <citation type="journal article" date="2007" name="J. Bacteriol.">
        <title>Genome-wide transcriptional changes in Streptococcus gordonii in response to competence signaling peptide.</title>
        <authorList>
            <person name="Vickerman M.M."/>
            <person name="Iobst S."/>
            <person name="Jesionowski A.M."/>
            <person name="Gill S.R."/>
        </authorList>
    </citation>
    <scope>NUCLEOTIDE SEQUENCE [LARGE SCALE GENOMIC DNA]</scope>
    <source>
        <strain>Challis / ATCC 35105 / BCRC 15272 / CH1 / DL1 / V288</strain>
    </source>
</reference>
<sequence length="777" mass="87381">MNTKILETLEFNKIKDLFQGSLQTEQGKLELQVLQPTTKKEAIERAFLEVTDMEQILVEDPHFHLAATKDITAISKRLELDGDLNIEELLVLKKVLRVSHDLVTFYNDLENVRLQELNRIFENLVDFPAIQGSLLAVNDGGFIESFASEELGRIRRKIQENESKVRDLLQEILKNKGDMLADQVVASRNGRNVLPVKNTYRNRIPGVVHDISASGTTIYIEPRAVVNLNEEISNYKADERYELLRILQELSAMIRPHAAEIANNAWIIGHLDLVMAKLAFMRERGAVVPAISDTQAIQLLQVRHPLIQNAVANDLHFGPDLTEIVITGPNTGGKTIMLKTLGLAQIMAQSGLPILADKGSRVGIFSQIFADIGDEQSIEQSLSTFSSHMTNIVSILEQVDSESLVLLDELGAGTDPQEGAALAIAILEDLRLRQIKTMATTHYPELKAYGIETDWVENASMEFDTDSLRPTYRFMQGVPGRSNAFEIARRLGLSEVIVSHAQEQTNTDSDVNQIIERLEEQTLESRKRLDNIREVEQENLKFNRALKKLYNEFNREKETELNKARLEAQEIVDLALSESESILKNLHAKSSLKPHEIIEAKAQLKKLAPETVDLSKNKVLKQAKKNRAPKVGDDILVTSYGQRGTLVKLLKDGRWEAQVGLIKMTLEEQEFNLLKAEKEQQPKRKQVNVVKRANTAGPRARLDLRGKRYEEAMKELDEFIDQALLNNMAQVDIIHGIGTGVIREGVNKYLRRNKHVKSFGYAPQNAGGSGATIVIFK</sequence>
<comment type="function">
    <text evidence="1">Endonuclease that is involved in the suppression of homologous recombination and thus may have a key role in the control of bacterial genetic diversity.</text>
</comment>
<comment type="function">
    <text evidence="1">Acts as a ribosome collision sensor, splitting the ribosome into its 2 subunits. Detects stalled/collided 70S ribosomes which it binds and splits by an ATP-hydrolysis driven conformational change. Acts upstream of the ribosome quality control system (RQC), a ribosome-associated complex that mediates the extraction of incompletely synthesized nascent chains from stalled ribosomes and their subsequent degradation. Probably generates substrates for RQC.</text>
</comment>
<comment type="subunit">
    <text evidence="1">Homodimer. Binds to stalled ribosomes, contacting rRNA.</text>
</comment>
<comment type="similarity">
    <text evidence="1">Belongs to the DNA mismatch repair MutS family. MutS2 subfamily.</text>
</comment>
<accession>A8AUW9</accession>
<proteinExistence type="inferred from homology"/>
<evidence type="ECO:0000255" key="1">
    <source>
        <dbReference type="HAMAP-Rule" id="MF_00092"/>
    </source>
</evidence>
<organism>
    <name type="scientific">Streptococcus gordonii (strain Challis / ATCC 35105 / BCRC 15272 / CH1 / DL1 / V288)</name>
    <dbReference type="NCBI Taxonomy" id="467705"/>
    <lineage>
        <taxon>Bacteria</taxon>
        <taxon>Bacillati</taxon>
        <taxon>Bacillota</taxon>
        <taxon>Bacilli</taxon>
        <taxon>Lactobacillales</taxon>
        <taxon>Streptococcaceae</taxon>
        <taxon>Streptococcus</taxon>
    </lineage>
</organism>
<feature type="chain" id="PRO_1000093390" description="Endonuclease MutS2">
    <location>
        <begin position="1"/>
        <end position="777"/>
    </location>
</feature>
<feature type="domain" description="Smr" evidence="1">
    <location>
        <begin position="702"/>
        <end position="777"/>
    </location>
</feature>
<feature type="binding site" evidence="1">
    <location>
        <begin position="328"/>
        <end position="335"/>
    </location>
    <ligand>
        <name>ATP</name>
        <dbReference type="ChEBI" id="CHEBI:30616"/>
    </ligand>
</feature>